<keyword id="KW-0963">Cytoplasm</keyword>
<keyword id="KW-0488">Methylation</keyword>
<keyword id="KW-0648">Protein biosynthesis</keyword>
<evidence type="ECO:0000255" key="1">
    <source>
        <dbReference type="HAMAP-Rule" id="MF_00093"/>
    </source>
</evidence>
<evidence type="ECO:0000256" key="2">
    <source>
        <dbReference type="SAM" id="MobiDB-lite"/>
    </source>
</evidence>
<dbReference type="EMBL" id="CP000681">
    <property type="protein sequence ID" value="ABP74531.1"/>
    <property type="molecule type" value="Genomic_DNA"/>
</dbReference>
<dbReference type="SMR" id="A4Y3J8"/>
<dbReference type="STRING" id="319224.Sputcn32_0801"/>
<dbReference type="KEGG" id="spc:Sputcn32_0801"/>
<dbReference type="eggNOG" id="COG0216">
    <property type="taxonomic scope" value="Bacteria"/>
</dbReference>
<dbReference type="HOGENOM" id="CLU_036856_0_1_6"/>
<dbReference type="GO" id="GO:0005737">
    <property type="term" value="C:cytoplasm"/>
    <property type="evidence" value="ECO:0007669"/>
    <property type="project" value="UniProtKB-SubCell"/>
</dbReference>
<dbReference type="GO" id="GO:0016149">
    <property type="term" value="F:translation release factor activity, codon specific"/>
    <property type="evidence" value="ECO:0007669"/>
    <property type="project" value="UniProtKB-UniRule"/>
</dbReference>
<dbReference type="FunFam" id="3.30.160.20:FF:000004">
    <property type="entry name" value="Peptide chain release factor 1"/>
    <property type="match status" value="1"/>
</dbReference>
<dbReference type="FunFam" id="3.30.70.1660:FF:000002">
    <property type="entry name" value="Peptide chain release factor 1"/>
    <property type="match status" value="1"/>
</dbReference>
<dbReference type="FunFam" id="3.30.70.1660:FF:000004">
    <property type="entry name" value="Peptide chain release factor 1"/>
    <property type="match status" value="1"/>
</dbReference>
<dbReference type="Gene3D" id="3.30.160.20">
    <property type="match status" value="1"/>
</dbReference>
<dbReference type="Gene3D" id="3.30.70.1660">
    <property type="match status" value="2"/>
</dbReference>
<dbReference type="Gene3D" id="6.10.140.1950">
    <property type="match status" value="1"/>
</dbReference>
<dbReference type="HAMAP" id="MF_00093">
    <property type="entry name" value="Rel_fac_1"/>
    <property type="match status" value="1"/>
</dbReference>
<dbReference type="InterPro" id="IPR005139">
    <property type="entry name" value="PCRF"/>
</dbReference>
<dbReference type="InterPro" id="IPR000352">
    <property type="entry name" value="Pep_chain_release_fac_I"/>
</dbReference>
<dbReference type="InterPro" id="IPR045853">
    <property type="entry name" value="Pep_chain_release_fac_I_sf"/>
</dbReference>
<dbReference type="InterPro" id="IPR050057">
    <property type="entry name" value="Prokaryotic/Mito_RF"/>
</dbReference>
<dbReference type="InterPro" id="IPR004373">
    <property type="entry name" value="RF-1"/>
</dbReference>
<dbReference type="NCBIfam" id="TIGR00019">
    <property type="entry name" value="prfA"/>
    <property type="match status" value="1"/>
</dbReference>
<dbReference type="NCBIfam" id="NF001859">
    <property type="entry name" value="PRK00591.1"/>
    <property type="match status" value="1"/>
</dbReference>
<dbReference type="PANTHER" id="PTHR43804">
    <property type="entry name" value="LD18447P"/>
    <property type="match status" value="1"/>
</dbReference>
<dbReference type="PANTHER" id="PTHR43804:SF7">
    <property type="entry name" value="LD18447P"/>
    <property type="match status" value="1"/>
</dbReference>
<dbReference type="Pfam" id="PF03462">
    <property type="entry name" value="PCRF"/>
    <property type="match status" value="1"/>
</dbReference>
<dbReference type="Pfam" id="PF00472">
    <property type="entry name" value="RF-1"/>
    <property type="match status" value="1"/>
</dbReference>
<dbReference type="SMART" id="SM00937">
    <property type="entry name" value="PCRF"/>
    <property type="match status" value="1"/>
</dbReference>
<dbReference type="SUPFAM" id="SSF75620">
    <property type="entry name" value="Release factor"/>
    <property type="match status" value="1"/>
</dbReference>
<dbReference type="PROSITE" id="PS00745">
    <property type="entry name" value="RF_PROK_I"/>
    <property type="match status" value="1"/>
</dbReference>
<organism>
    <name type="scientific">Shewanella putrefaciens (strain CN-32 / ATCC BAA-453)</name>
    <dbReference type="NCBI Taxonomy" id="319224"/>
    <lineage>
        <taxon>Bacteria</taxon>
        <taxon>Pseudomonadati</taxon>
        <taxon>Pseudomonadota</taxon>
        <taxon>Gammaproteobacteria</taxon>
        <taxon>Alteromonadales</taxon>
        <taxon>Shewanellaceae</taxon>
        <taxon>Shewanella</taxon>
    </lineage>
</organism>
<accession>A4Y3J8</accession>
<gene>
    <name evidence="1" type="primary">prfA</name>
    <name type="ordered locus">Sputcn32_0801</name>
</gene>
<feature type="chain" id="PRO_1000004950" description="Peptide chain release factor 1">
    <location>
        <begin position="1"/>
        <end position="363"/>
    </location>
</feature>
<feature type="region of interest" description="Disordered" evidence="2">
    <location>
        <begin position="284"/>
        <end position="306"/>
    </location>
</feature>
<feature type="compositionally biased region" description="Basic and acidic residues" evidence="2">
    <location>
        <begin position="284"/>
        <end position="296"/>
    </location>
</feature>
<feature type="modified residue" description="N5-methylglutamine" evidence="1">
    <location>
        <position position="237"/>
    </location>
</feature>
<sequence length="363" mass="40400">MKESVIRKLEGLLERNEEVLALLGDASVIADQDRFRALSKEYSQLEEVVAGFKAYQQAQADLDSAKEMLEEDDAEMREMAQEEMKAAKAELERLESELQILLLPKDPNDDTNAFIEIRAGAGGDEAAIFAGDLFRMYSRYAEANRWQMEVMSCNEGEHGGFKEIIVKVSGEGAYGKLKFESGGHRVQRVPETESQGRVHTSAVTVVVMHEVPEAEAISINPADLKVDTFRSSGAGGQHVNKTDSAIRITHIPTGIVVECQDQRSQHKNRAQAMSVLAARIQAVEDEKRRSAEESTRRSLVASGDRSERVRTYNFPQGRVSEHRINLTLYRLNEVMEGDLDAILTPLMQEHQADLLAALADEQG</sequence>
<proteinExistence type="inferred from homology"/>
<name>RF1_SHEPC</name>
<comment type="function">
    <text evidence="1">Peptide chain release factor 1 directs the termination of translation in response to the peptide chain termination codons UAG and UAA.</text>
</comment>
<comment type="subcellular location">
    <subcellularLocation>
        <location evidence="1">Cytoplasm</location>
    </subcellularLocation>
</comment>
<comment type="PTM">
    <text evidence="1">Methylated by PrmC. Methylation increases the termination efficiency of RF1.</text>
</comment>
<comment type="similarity">
    <text evidence="1">Belongs to the prokaryotic/mitochondrial release factor family.</text>
</comment>
<reference key="1">
    <citation type="submission" date="2007-04" db="EMBL/GenBank/DDBJ databases">
        <title>Complete sequence of Shewanella putrefaciens CN-32.</title>
        <authorList>
            <consortium name="US DOE Joint Genome Institute"/>
            <person name="Copeland A."/>
            <person name="Lucas S."/>
            <person name="Lapidus A."/>
            <person name="Barry K."/>
            <person name="Detter J.C."/>
            <person name="Glavina del Rio T."/>
            <person name="Hammon N."/>
            <person name="Israni S."/>
            <person name="Dalin E."/>
            <person name="Tice H."/>
            <person name="Pitluck S."/>
            <person name="Chain P."/>
            <person name="Malfatti S."/>
            <person name="Shin M."/>
            <person name="Vergez L."/>
            <person name="Schmutz J."/>
            <person name="Larimer F."/>
            <person name="Land M."/>
            <person name="Hauser L."/>
            <person name="Kyrpides N."/>
            <person name="Mikhailova N."/>
            <person name="Romine M.F."/>
            <person name="Fredrickson J."/>
            <person name="Tiedje J."/>
            <person name="Richardson P."/>
        </authorList>
    </citation>
    <scope>NUCLEOTIDE SEQUENCE [LARGE SCALE GENOMIC DNA]</scope>
    <source>
        <strain>CN-32 / ATCC BAA-453</strain>
    </source>
</reference>
<protein>
    <recommendedName>
        <fullName evidence="1">Peptide chain release factor 1</fullName>
        <shortName evidence="1">RF-1</shortName>
    </recommendedName>
</protein>